<keyword id="KW-0963">Cytoplasm</keyword>
<keyword id="KW-0489">Methyltransferase</keyword>
<keyword id="KW-0694">RNA-binding</keyword>
<keyword id="KW-0698">rRNA processing</keyword>
<keyword id="KW-0949">S-adenosyl-L-methionine</keyword>
<keyword id="KW-0808">Transferase</keyword>
<evidence type="ECO:0000255" key="1">
    <source>
        <dbReference type="HAMAP-Rule" id="MF_00607"/>
    </source>
</evidence>
<comment type="function">
    <text evidence="1">Specifically dimethylates two adjacent adenosines (A1518 and A1519) in the loop of a conserved hairpin near the 3'-end of 16S rRNA in the 30S particle. May play a critical role in biogenesis of 30S subunits.</text>
</comment>
<comment type="catalytic activity">
    <reaction evidence="1">
        <text>adenosine(1518)/adenosine(1519) in 16S rRNA + 4 S-adenosyl-L-methionine = N(6)-dimethyladenosine(1518)/N(6)-dimethyladenosine(1519) in 16S rRNA + 4 S-adenosyl-L-homocysteine + 4 H(+)</text>
        <dbReference type="Rhea" id="RHEA:19609"/>
        <dbReference type="Rhea" id="RHEA-COMP:10232"/>
        <dbReference type="Rhea" id="RHEA-COMP:10233"/>
        <dbReference type="ChEBI" id="CHEBI:15378"/>
        <dbReference type="ChEBI" id="CHEBI:57856"/>
        <dbReference type="ChEBI" id="CHEBI:59789"/>
        <dbReference type="ChEBI" id="CHEBI:74411"/>
        <dbReference type="ChEBI" id="CHEBI:74493"/>
        <dbReference type="EC" id="2.1.1.182"/>
    </reaction>
</comment>
<comment type="subcellular location">
    <subcellularLocation>
        <location evidence="1">Cytoplasm</location>
    </subcellularLocation>
</comment>
<comment type="similarity">
    <text evidence="1">Belongs to the class I-like SAM-binding methyltransferase superfamily. rRNA adenine N(6)-methyltransferase family. RsmA subfamily.</text>
</comment>
<sequence>MTEPNSEPAAVAPLMGATDIRRLAEEIGVRPTKTLGQNFVIDGNTIRRIVAAAAIGDDETVLEVGPGLGSLTLGLLDAAKAVVAVEIDPVLAEKLPETVRAWRPGAEENFHLVLSDAMKVTELPLPPTALVANLPYNVAVPVVLHLLQHFPSLQHGLVMVQDEVADRLAATPGSKIYGVPSVKAAWYGHMRKAGVIGMNVFWPAPKIHSGLVAFTRHDPPETHATREQVFAVIDAAFAQRRKTLRAALAGWAGSASEAERCLVAAGLDPTARGEVLDINAYVKIAEARHPVDA</sequence>
<name>RSMA_PAEAT</name>
<dbReference type="EC" id="2.1.1.182" evidence="1"/>
<dbReference type="EMBL" id="CP000474">
    <property type="protein sequence ID" value="ABM07152.1"/>
    <property type="molecule type" value="Genomic_DNA"/>
</dbReference>
<dbReference type="RefSeq" id="WP_011774066.1">
    <property type="nucleotide sequence ID" value="NC_008711.1"/>
</dbReference>
<dbReference type="SMR" id="A1R4F7"/>
<dbReference type="STRING" id="290340.AAur_1337"/>
<dbReference type="KEGG" id="aau:AAur_1337"/>
<dbReference type="eggNOG" id="COG0030">
    <property type="taxonomic scope" value="Bacteria"/>
</dbReference>
<dbReference type="HOGENOM" id="CLU_041220_1_1_11"/>
<dbReference type="OrthoDB" id="9814755at2"/>
<dbReference type="Proteomes" id="UP000000637">
    <property type="component" value="Chromosome"/>
</dbReference>
<dbReference type="GO" id="GO:0005829">
    <property type="term" value="C:cytosol"/>
    <property type="evidence" value="ECO:0007669"/>
    <property type="project" value="TreeGrafter"/>
</dbReference>
<dbReference type="GO" id="GO:0052908">
    <property type="term" value="F:16S rRNA (adenine(1518)-N(6)/adenine(1519)-N(6))-dimethyltransferase activity"/>
    <property type="evidence" value="ECO:0007669"/>
    <property type="project" value="UniProtKB-EC"/>
</dbReference>
<dbReference type="GO" id="GO:0003723">
    <property type="term" value="F:RNA binding"/>
    <property type="evidence" value="ECO:0007669"/>
    <property type="project" value="UniProtKB-KW"/>
</dbReference>
<dbReference type="FunFam" id="1.10.8.100:FF:000003">
    <property type="entry name" value="Ribosomal RNA small subunit methyltransferase A"/>
    <property type="match status" value="1"/>
</dbReference>
<dbReference type="FunFam" id="3.40.50.150:FF:000023">
    <property type="entry name" value="Ribosomal RNA small subunit methyltransferase A"/>
    <property type="match status" value="1"/>
</dbReference>
<dbReference type="Gene3D" id="1.10.8.100">
    <property type="entry name" value="Ribosomal RNA adenine dimethylase-like, domain 2"/>
    <property type="match status" value="1"/>
</dbReference>
<dbReference type="Gene3D" id="3.40.50.150">
    <property type="entry name" value="Vaccinia Virus protein VP39"/>
    <property type="match status" value="1"/>
</dbReference>
<dbReference type="HAMAP" id="MF_00607">
    <property type="entry name" value="16SrRNA_methyltr_A"/>
    <property type="match status" value="1"/>
</dbReference>
<dbReference type="InterPro" id="IPR001737">
    <property type="entry name" value="KsgA/Erm"/>
</dbReference>
<dbReference type="InterPro" id="IPR023165">
    <property type="entry name" value="rRNA_Ade_diMease-like_C"/>
</dbReference>
<dbReference type="InterPro" id="IPR020596">
    <property type="entry name" value="rRNA_Ade_Mease_Trfase_CS"/>
</dbReference>
<dbReference type="InterPro" id="IPR020598">
    <property type="entry name" value="rRNA_Ade_methylase_Trfase_N"/>
</dbReference>
<dbReference type="InterPro" id="IPR011530">
    <property type="entry name" value="rRNA_adenine_dimethylase"/>
</dbReference>
<dbReference type="InterPro" id="IPR029063">
    <property type="entry name" value="SAM-dependent_MTases_sf"/>
</dbReference>
<dbReference type="NCBIfam" id="TIGR00755">
    <property type="entry name" value="ksgA"/>
    <property type="match status" value="1"/>
</dbReference>
<dbReference type="PANTHER" id="PTHR11727">
    <property type="entry name" value="DIMETHYLADENOSINE TRANSFERASE"/>
    <property type="match status" value="1"/>
</dbReference>
<dbReference type="PANTHER" id="PTHR11727:SF7">
    <property type="entry name" value="DIMETHYLADENOSINE TRANSFERASE-RELATED"/>
    <property type="match status" value="1"/>
</dbReference>
<dbReference type="Pfam" id="PF00398">
    <property type="entry name" value="RrnaAD"/>
    <property type="match status" value="1"/>
</dbReference>
<dbReference type="SMART" id="SM00650">
    <property type="entry name" value="rADc"/>
    <property type="match status" value="1"/>
</dbReference>
<dbReference type="SUPFAM" id="SSF53335">
    <property type="entry name" value="S-adenosyl-L-methionine-dependent methyltransferases"/>
    <property type="match status" value="1"/>
</dbReference>
<dbReference type="PROSITE" id="PS01131">
    <property type="entry name" value="RRNA_A_DIMETH"/>
    <property type="match status" value="1"/>
</dbReference>
<dbReference type="PROSITE" id="PS51689">
    <property type="entry name" value="SAM_RNA_A_N6_MT"/>
    <property type="match status" value="1"/>
</dbReference>
<organism>
    <name type="scientific">Paenarthrobacter aurescens (strain TC1)</name>
    <dbReference type="NCBI Taxonomy" id="290340"/>
    <lineage>
        <taxon>Bacteria</taxon>
        <taxon>Bacillati</taxon>
        <taxon>Actinomycetota</taxon>
        <taxon>Actinomycetes</taxon>
        <taxon>Micrococcales</taxon>
        <taxon>Micrococcaceae</taxon>
        <taxon>Paenarthrobacter</taxon>
    </lineage>
</organism>
<accession>A1R4F7</accession>
<protein>
    <recommendedName>
        <fullName evidence="1">Ribosomal RNA small subunit methyltransferase A</fullName>
        <ecNumber evidence="1">2.1.1.182</ecNumber>
    </recommendedName>
    <alternativeName>
        <fullName evidence="1">16S rRNA (adenine(1518)-N(6)/adenine(1519)-N(6))-dimethyltransferase</fullName>
    </alternativeName>
    <alternativeName>
        <fullName evidence="1">16S rRNA dimethyladenosine transferase</fullName>
    </alternativeName>
    <alternativeName>
        <fullName evidence="1">16S rRNA dimethylase</fullName>
    </alternativeName>
    <alternativeName>
        <fullName evidence="1">S-adenosylmethionine-6-N', N'-adenosyl(rRNA) dimethyltransferase</fullName>
    </alternativeName>
</protein>
<reference key="1">
    <citation type="journal article" date="2006" name="PLoS Genet.">
        <title>Secrets of soil survival revealed by the genome sequence of Arthrobacter aurescens TC1.</title>
        <authorList>
            <person name="Mongodin E.F."/>
            <person name="Shapir N."/>
            <person name="Daugherty S.C."/>
            <person name="DeBoy R.T."/>
            <person name="Emerson J.B."/>
            <person name="Shvartzbeyn A."/>
            <person name="Radune D."/>
            <person name="Vamathevan J."/>
            <person name="Riggs F."/>
            <person name="Grinberg V."/>
            <person name="Khouri H.M."/>
            <person name="Wackett L.P."/>
            <person name="Nelson K.E."/>
            <person name="Sadowsky M.J."/>
        </authorList>
    </citation>
    <scope>NUCLEOTIDE SEQUENCE [LARGE SCALE GENOMIC DNA]</scope>
    <source>
        <strain>TC1</strain>
    </source>
</reference>
<feature type="chain" id="PRO_1000061280" description="Ribosomal RNA small subunit methyltransferase A">
    <location>
        <begin position="1"/>
        <end position="293"/>
    </location>
</feature>
<feature type="binding site" evidence="1">
    <location>
        <position position="38"/>
    </location>
    <ligand>
        <name>S-adenosyl-L-methionine</name>
        <dbReference type="ChEBI" id="CHEBI:59789"/>
    </ligand>
</feature>
<feature type="binding site" evidence="1">
    <location>
        <position position="40"/>
    </location>
    <ligand>
        <name>S-adenosyl-L-methionine</name>
        <dbReference type="ChEBI" id="CHEBI:59789"/>
    </ligand>
</feature>
<feature type="binding site" evidence="1">
    <location>
        <position position="65"/>
    </location>
    <ligand>
        <name>S-adenosyl-L-methionine</name>
        <dbReference type="ChEBI" id="CHEBI:59789"/>
    </ligand>
</feature>
<feature type="binding site" evidence="1">
    <location>
        <position position="86"/>
    </location>
    <ligand>
        <name>S-adenosyl-L-methionine</name>
        <dbReference type="ChEBI" id="CHEBI:59789"/>
    </ligand>
</feature>
<feature type="binding site" evidence="1">
    <location>
        <position position="116"/>
    </location>
    <ligand>
        <name>S-adenosyl-L-methionine</name>
        <dbReference type="ChEBI" id="CHEBI:59789"/>
    </ligand>
</feature>
<feature type="binding site" evidence="1">
    <location>
        <position position="133"/>
    </location>
    <ligand>
        <name>S-adenosyl-L-methionine</name>
        <dbReference type="ChEBI" id="CHEBI:59789"/>
    </ligand>
</feature>
<gene>
    <name evidence="1" type="primary">rsmA</name>
    <name evidence="1" type="synonym">ksgA</name>
    <name type="ordered locus">AAur_1337</name>
</gene>
<proteinExistence type="inferred from homology"/>